<keyword id="KW-0687">Ribonucleoprotein</keyword>
<keyword id="KW-0689">Ribosomal protein</keyword>
<keyword id="KW-0694">RNA-binding</keyword>
<keyword id="KW-0699">rRNA-binding</keyword>
<keyword id="KW-0820">tRNA-binding</keyword>
<reference key="1">
    <citation type="journal article" date="2010" name="Genome Biol. Evol.">
        <title>Continuing evolution of Burkholderia mallei through genome reduction and large-scale rearrangements.</title>
        <authorList>
            <person name="Losada L."/>
            <person name="Ronning C.M."/>
            <person name="DeShazer D."/>
            <person name="Woods D."/>
            <person name="Fedorova N."/>
            <person name="Kim H.S."/>
            <person name="Shabalina S.A."/>
            <person name="Pearson T.R."/>
            <person name="Brinkac L."/>
            <person name="Tan P."/>
            <person name="Nandi T."/>
            <person name="Crabtree J."/>
            <person name="Badger J."/>
            <person name="Beckstrom-Sternberg S."/>
            <person name="Saqib M."/>
            <person name="Schutzer S.E."/>
            <person name="Keim P."/>
            <person name="Nierman W.C."/>
        </authorList>
    </citation>
    <scope>NUCLEOTIDE SEQUENCE [LARGE SCALE GENOMIC DNA]</scope>
    <source>
        <strain>668</strain>
    </source>
</reference>
<accession>A3NEH2</accession>
<dbReference type="EMBL" id="CP000570">
    <property type="protein sequence ID" value="ABN84360.1"/>
    <property type="molecule type" value="Genomic_DNA"/>
</dbReference>
<dbReference type="RefSeq" id="WP_004199857.1">
    <property type="nucleotide sequence ID" value="NC_009074.1"/>
</dbReference>
<dbReference type="SMR" id="A3NEH2"/>
<dbReference type="GeneID" id="93061825"/>
<dbReference type="KEGG" id="bpd:BURPS668_3739"/>
<dbReference type="HOGENOM" id="CLU_078858_2_1_4"/>
<dbReference type="GO" id="GO:0022625">
    <property type="term" value="C:cytosolic large ribosomal subunit"/>
    <property type="evidence" value="ECO:0007669"/>
    <property type="project" value="TreeGrafter"/>
</dbReference>
<dbReference type="GO" id="GO:0019843">
    <property type="term" value="F:rRNA binding"/>
    <property type="evidence" value="ECO:0007669"/>
    <property type="project" value="UniProtKB-UniRule"/>
</dbReference>
<dbReference type="GO" id="GO:0003735">
    <property type="term" value="F:structural constituent of ribosome"/>
    <property type="evidence" value="ECO:0007669"/>
    <property type="project" value="InterPro"/>
</dbReference>
<dbReference type="GO" id="GO:0000049">
    <property type="term" value="F:tRNA binding"/>
    <property type="evidence" value="ECO:0007669"/>
    <property type="project" value="UniProtKB-KW"/>
</dbReference>
<dbReference type="GO" id="GO:0006412">
    <property type="term" value="P:translation"/>
    <property type="evidence" value="ECO:0007669"/>
    <property type="project" value="UniProtKB-UniRule"/>
</dbReference>
<dbReference type="CDD" id="cd01433">
    <property type="entry name" value="Ribosomal_L16_L10e"/>
    <property type="match status" value="1"/>
</dbReference>
<dbReference type="FunFam" id="3.90.1170.10:FF:000001">
    <property type="entry name" value="50S ribosomal protein L16"/>
    <property type="match status" value="1"/>
</dbReference>
<dbReference type="Gene3D" id="3.90.1170.10">
    <property type="entry name" value="Ribosomal protein L10e/L16"/>
    <property type="match status" value="1"/>
</dbReference>
<dbReference type="HAMAP" id="MF_01342">
    <property type="entry name" value="Ribosomal_uL16"/>
    <property type="match status" value="1"/>
</dbReference>
<dbReference type="InterPro" id="IPR047873">
    <property type="entry name" value="Ribosomal_uL16"/>
</dbReference>
<dbReference type="InterPro" id="IPR000114">
    <property type="entry name" value="Ribosomal_uL16_bact-type"/>
</dbReference>
<dbReference type="InterPro" id="IPR020798">
    <property type="entry name" value="Ribosomal_uL16_CS"/>
</dbReference>
<dbReference type="InterPro" id="IPR016180">
    <property type="entry name" value="Ribosomal_uL16_dom"/>
</dbReference>
<dbReference type="InterPro" id="IPR036920">
    <property type="entry name" value="Ribosomal_uL16_sf"/>
</dbReference>
<dbReference type="NCBIfam" id="TIGR01164">
    <property type="entry name" value="rplP_bact"/>
    <property type="match status" value="1"/>
</dbReference>
<dbReference type="PANTHER" id="PTHR12220">
    <property type="entry name" value="50S/60S RIBOSOMAL PROTEIN L16"/>
    <property type="match status" value="1"/>
</dbReference>
<dbReference type="PANTHER" id="PTHR12220:SF13">
    <property type="entry name" value="LARGE RIBOSOMAL SUBUNIT PROTEIN UL16M"/>
    <property type="match status" value="1"/>
</dbReference>
<dbReference type="Pfam" id="PF00252">
    <property type="entry name" value="Ribosomal_L16"/>
    <property type="match status" value="1"/>
</dbReference>
<dbReference type="PRINTS" id="PR00060">
    <property type="entry name" value="RIBOSOMALL16"/>
</dbReference>
<dbReference type="SUPFAM" id="SSF54686">
    <property type="entry name" value="Ribosomal protein L16p/L10e"/>
    <property type="match status" value="1"/>
</dbReference>
<dbReference type="PROSITE" id="PS00586">
    <property type="entry name" value="RIBOSOMAL_L16_1"/>
    <property type="match status" value="1"/>
</dbReference>
<sequence length="138" mass="15583">MLQPKRRKYRKEQKGRNTGIATRGNAVSFGEFGLKAVGRGRLTARQIEAARRAMTRHIKRGGRIWIRIFPDKPISQKPAEVRMGNGKGNPEYYVAEIQPGKMLYEMDGVSEELAREAFRLAAAKLPLKTTFIVRQLGA</sequence>
<proteinExistence type="inferred from homology"/>
<gene>
    <name evidence="1" type="primary">rplP</name>
    <name type="ordered locus">BURPS668_3739</name>
</gene>
<feature type="chain" id="PRO_1000054593" description="Large ribosomal subunit protein uL16">
    <location>
        <begin position="1"/>
        <end position="138"/>
    </location>
</feature>
<feature type="region of interest" description="Disordered" evidence="2">
    <location>
        <begin position="1"/>
        <end position="20"/>
    </location>
</feature>
<feature type="compositionally biased region" description="Basic residues" evidence="2">
    <location>
        <begin position="1"/>
        <end position="13"/>
    </location>
</feature>
<organism>
    <name type="scientific">Burkholderia pseudomallei (strain 668)</name>
    <dbReference type="NCBI Taxonomy" id="320373"/>
    <lineage>
        <taxon>Bacteria</taxon>
        <taxon>Pseudomonadati</taxon>
        <taxon>Pseudomonadota</taxon>
        <taxon>Betaproteobacteria</taxon>
        <taxon>Burkholderiales</taxon>
        <taxon>Burkholderiaceae</taxon>
        <taxon>Burkholderia</taxon>
        <taxon>pseudomallei group</taxon>
    </lineage>
</organism>
<evidence type="ECO:0000255" key="1">
    <source>
        <dbReference type="HAMAP-Rule" id="MF_01342"/>
    </source>
</evidence>
<evidence type="ECO:0000256" key="2">
    <source>
        <dbReference type="SAM" id="MobiDB-lite"/>
    </source>
</evidence>
<evidence type="ECO:0000305" key="3"/>
<name>RL16_BURP6</name>
<comment type="function">
    <text evidence="1">Binds 23S rRNA and is also seen to make contacts with the A and possibly P site tRNAs.</text>
</comment>
<comment type="subunit">
    <text evidence="1">Part of the 50S ribosomal subunit.</text>
</comment>
<comment type="similarity">
    <text evidence="1">Belongs to the universal ribosomal protein uL16 family.</text>
</comment>
<protein>
    <recommendedName>
        <fullName evidence="1">Large ribosomal subunit protein uL16</fullName>
    </recommendedName>
    <alternativeName>
        <fullName evidence="3">50S ribosomal protein L16</fullName>
    </alternativeName>
</protein>